<gene>
    <name evidence="1" type="primary">gloB</name>
    <name type="ordered locus">XAC1087</name>
</gene>
<proteinExistence type="inferred from homology"/>
<sequence>MRLIALPAFDDNYIWALVAADGRAIIVDPGQAEPVLAAAQRQGLVPSAVLLTHHHGDHIGGVAELQQRWPDLALFGPADERIPTNAHHVGRGERLRLLDVEFQVIKVPGHTRSHIAFLADGHLFSGDTLFSLGCGRMFEGTAPQMFDSLQRLASLPGETLVCCGHEYTLANAAFALHVDPTNAALQRRQQEAQAMRHAARPTLPISLKSELATNPFLRTSHPEIRAAVAPRAASALSSEVDIFAELRRWKDEFRA</sequence>
<protein>
    <recommendedName>
        <fullName evidence="1">Hydroxyacylglutathione hydrolase</fullName>
        <ecNumber evidence="1">3.1.2.6</ecNumber>
    </recommendedName>
    <alternativeName>
        <fullName evidence="1">Glyoxalase II</fullName>
        <shortName evidence="1">Glx II</shortName>
    </alternativeName>
</protein>
<feature type="chain" id="PRO_1000068229" description="Hydroxyacylglutathione hydrolase">
    <location>
        <begin position="1"/>
        <end position="255"/>
    </location>
</feature>
<feature type="binding site" evidence="1">
    <location>
        <position position="53"/>
    </location>
    <ligand>
        <name>Zn(2+)</name>
        <dbReference type="ChEBI" id="CHEBI:29105"/>
        <label>1</label>
    </ligand>
</feature>
<feature type="binding site" evidence="1">
    <location>
        <position position="55"/>
    </location>
    <ligand>
        <name>Zn(2+)</name>
        <dbReference type="ChEBI" id="CHEBI:29105"/>
        <label>1</label>
    </ligand>
</feature>
<feature type="binding site" evidence="1">
    <location>
        <position position="57"/>
    </location>
    <ligand>
        <name>Zn(2+)</name>
        <dbReference type="ChEBI" id="CHEBI:29105"/>
        <label>2</label>
    </ligand>
</feature>
<feature type="binding site" evidence="1">
    <location>
        <position position="58"/>
    </location>
    <ligand>
        <name>Zn(2+)</name>
        <dbReference type="ChEBI" id="CHEBI:29105"/>
        <label>2</label>
    </ligand>
</feature>
<feature type="binding site" evidence="1">
    <location>
        <position position="110"/>
    </location>
    <ligand>
        <name>Zn(2+)</name>
        <dbReference type="ChEBI" id="CHEBI:29105"/>
        <label>1</label>
    </ligand>
</feature>
<feature type="binding site" evidence="1">
    <location>
        <position position="127"/>
    </location>
    <ligand>
        <name>Zn(2+)</name>
        <dbReference type="ChEBI" id="CHEBI:29105"/>
        <label>1</label>
    </ligand>
</feature>
<feature type="binding site" evidence="1">
    <location>
        <position position="127"/>
    </location>
    <ligand>
        <name>Zn(2+)</name>
        <dbReference type="ChEBI" id="CHEBI:29105"/>
        <label>2</label>
    </ligand>
</feature>
<feature type="binding site" evidence="1">
    <location>
        <position position="165"/>
    </location>
    <ligand>
        <name>Zn(2+)</name>
        <dbReference type="ChEBI" id="CHEBI:29105"/>
        <label>2</label>
    </ligand>
</feature>
<evidence type="ECO:0000255" key="1">
    <source>
        <dbReference type="HAMAP-Rule" id="MF_01374"/>
    </source>
</evidence>
<dbReference type="EC" id="3.1.2.6" evidence="1"/>
<dbReference type="EMBL" id="AE008923">
    <property type="protein sequence ID" value="AAM35962.1"/>
    <property type="molecule type" value="Genomic_DNA"/>
</dbReference>
<dbReference type="RefSeq" id="WP_011050696.1">
    <property type="nucleotide sequence ID" value="NC_003919.1"/>
</dbReference>
<dbReference type="SMR" id="Q8PNI0"/>
<dbReference type="GeneID" id="66910265"/>
<dbReference type="KEGG" id="xac:XAC1087"/>
<dbReference type="eggNOG" id="COG0491">
    <property type="taxonomic scope" value="Bacteria"/>
</dbReference>
<dbReference type="HOGENOM" id="CLU_030571_4_1_6"/>
<dbReference type="UniPathway" id="UPA00619">
    <property type="reaction ID" value="UER00676"/>
</dbReference>
<dbReference type="Proteomes" id="UP000000576">
    <property type="component" value="Chromosome"/>
</dbReference>
<dbReference type="GO" id="GO:0004416">
    <property type="term" value="F:hydroxyacylglutathione hydrolase activity"/>
    <property type="evidence" value="ECO:0007669"/>
    <property type="project" value="UniProtKB-UniRule"/>
</dbReference>
<dbReference type="GO" id="GO:0046872">
    <property type="term" value="F:metal ion binding"/>
    <property type="evidence" value="ECO:0007669"/>
    <property type="project" value="UniProtKB-KW"/>
</dbReference>
<dbReference type="GO" id="GO:0019243">
    <property type="term" value="P:methylglyoxal catabolic process to D-lactate via S-lactoyl-glutathione"/>
    <property type="evidence" value="ECO:0007669"/>
    <property type="project" value="InterPro"/>
</dbReference>
<dbReference type="CDD" id="cd07723">
    <property type="entry name" value="hydroxyacylglutathione_hydrolase_MBL-fold"/>
    <property type="match status" value="1"/>
</dbReference>
<dbReference type="Gene3D" id="3.60.15.10">
    <property type="entry name" value="Ribonuclease Z/Hydroxyacylglutathione hydrolase-like"/>
    <property type="match status" value="1"/>
</dbReference>
<dbReference type="HAMAP" id="MF_01374">
    <property type="entry name" value="Glyoxalase_2"/>
    <property type="match status" value="1"/>
</dbReference>
<dbReference type="InterPro" id="IPR035680">
    <property type="entry name" value="Clx_II_MBL"/>
</dbReference>
<dbReference type="InterPro" id="IPR050110">
    <property type="entry name" value="Glyoxalase_II_hydrolase"/>
</dbReference>
<dbReference type="InterPro" id="IPR032282">
    <property type="entry name" value="HAGH_C"/>
</dbReference>
<dbReference type="InterPro" id="IPR017782">
    <property type="entry name" value="Hydroxyacylglutathione_Hdrlase"/>
</dbReference>
<dbReference type="InterPro" id="IPR001279">
    <property type="entry name" value="Metallo-B-lactamas"/>
</dbReference>
<dbReference type="InterPro" id="IPR036866">
    <property type="entry name" value="RibonucZ/Hydroxyglut_hydro"/>
</dbReference>
<dbReference type="NCBIfam" id="TIGR03413">
    <property type="entry name" value="GSH_gloB"/>
    <property type="match status" value="1"/>
</dbReference>
<dbReference type="PANTHER" id="PTHR43705">
    <property type="entry name" value="HYDROXYACYLGLUTATHIONE HYDROLASE"/>
    <property type="match status" value="1"/>
</dbReference>
<dbReference type="PANTHER" id="PTHR43705:SF1">
    <property type="entry name" value="HYDROXYACYLGLUTATHIONE HYDROLASE GLOB"/>
    <property type="match status" value="1"/>
</dbReference>
<dbReference type="Pfam" id="PF16123">
    <property type="entry name" value="HAGH_C"/>
    <property type="match status" value="1"/>
</dbReference>
<dbReference type="Pfam" id="PF00753">
    <property type="entry name" value="Lactamase_B"/>
    <property type="match status" value="1"/>
</dbReference>
<dbReference type="PIRSF" id="PIRSF005457">
    <property type="entry name" value="Glx"/>
    <property type="match status" value="1"/>
</dbReference>
<dbReference type="SMART" id="SM00849">
    <property type="entry name" value="Lactamase_B"/>
    <property type="match status" value="1"/>
</dbReference>
<dbReference type="SUPFAM" id="SSF56281">
    <property type="entry name" value="Metallo-hydrolase/oxidoreductase"/>
    <property type="match status" value="1"/>
</dbReference>
<comment type="function">
    <text evidence="1">Thiolesterase that catalyzes the hydrolysis of S-D-lactoyl-glutathione to form glutathione and D-lactic acid.</text>
</comment>
<comment type="catalytic activity">
    <reaction evidence="1">
        <text>an S-(2-hydroxyacyl)glutathione + H2O = a 2-hydroxy carboxylate + glutathione + H(+)</text>
        <dbReference type="Rhea" id="RHEA:21864"/>
        <dbReference type="ChEBI" id="CHEBI:15377"/>
        <dbReference type="ChEBI" id="CHEBI:15378"/>
        <dbReference type="ChEBI" id="CHEBI:57925"/>
        <dbReference type="ChEBI" id="CHEBI:58896"/>
        <dbReference type="ChEBI" id="CHEBI:71261"/>
        <dbReference type="EC" id="3.1.2.6"/>
    </reaction>
</comment>
<comment type="cofactor">
    <cofactor evidence="1">
        <name>Zn(2+)</name>
        <dbReference type="ChEBI" id="CHEBI:29105"/>
    </cofactor>
    <text evidence="1">Binds 2 Zn(2+) ions per subunit.</text>
</comment>
<comment type="pathway">
    <text evidence="1">Secondary metabolite metabolism; methylglyoxal degradation; (R)-lactate from methylglyoxal: step 2/2.</text>
</comment>
<comment type="subunit">
    <text evidence="1">Monomer.</text>
</comment>
<comment type="similarity">
    <text evidence="1">Belongs to the metallo-beta-lactamase superfamily. Glyoxalase II family.</text>
</comment>
<accession>Q8PNI0</accession>
<keyword id="KW-0378">Hydrolase</keyword>
<keyword id="KW-0479">Metal-binding</keyword>
<keyword id="KW-0862">Zinc</keyword>
<reference key="1">
    <citation type="journal article" date="2002" name="Nature">
        <title>Comparison of the genomes of two Xanthomonas pathogens with differing host specificities.</title>
        <authorList>
            <person name="da Silva A.C.R."/>
            <person name="Ferro J.A."/>
            <person name="Reinach F.C."/>
            <person name="Farah C.S."/>
            <person name="Furlan L.R."/>
            <person name="Quaggio R.B."/>
            <person name="Monteiro-Vitorello C.B."/>
            <person name="Van Sluys M.A."/>
            <person name="Almeida N.F. Jr."/>
            <person name="Alves L.M.C."/>
            <person name="do Amaral A.M."/>
            <person name="Bertolini M.C."/>
            <person name="Camargo L.E.A."/>
            <person name="Camarotte G."/>
            <person name="Cannavan F."/>
            <person name="Cardozo J."/>
            <person name="Chambergo F."/>
            <person name="Ciapina L.P."/>
            <person name="Cicarelli R.M.B."/>
            <person name="Coutinho L.L."/>
            <person name="Cursino-Santos J.R."/>
            <person name="El-Dorry H."/>
            <person name="Faria J.B."/>
            <person name="Ferreira A.J.S."/>
            <person name="Ferreira R.C.C."/>
            <person name="Ferro M.I.T."/>
            <person name="Formighieri E.F."/>
            <person name="Franco M.C."/>
            <person name="Greggio C.C."/>
            <person name="Gruber A."/>
            <person name="Katsuyama A.M."/>
            <person name="Kishi L.T."/>
            <person name="Leite R.P."/>
            <person name="Lemos E.G.M."/>
            <person name="Lemos M.V.F."/>
            <person name="Locali E.C."/>
            <person name="Machado M.A."/>
            <person name="Madeira A.M.B.N."/>
            <person name="Martinez-Rossi N.M."/>
            <person name="Martins E.C."/>
            <person name="Meidanis J."/>
            <person name="Menck C.F.M."/>
            <person name="Miyaki C.Y."/>
            <person name="Moon D.H."/>
            <person name="Moreira L.M."/>
            <person name="Novo M.T.M."/>
            <person name="Okura V.K."/>
            <person name="Oliveira M.C."/>
            <person name="Oliveira V.R."/>
            <person name="Pereira H.A."/>
            <person name="Rossi A."/>
            <person name="Sena J.A.D."/>
            <person name="Silva C."/>
            <person name="de Souza R.F."/>
            <person name="Spinola L.A.F."/>
            <person name="Takita M.A."/>
            <person name="Tamura R.E."/>
            <person name="Teixeira E.C."/>
            <person name="Tezza R.I.D."/>
            <person name="Trindade dos Santos M."/>
            <person name="Truffi D."/>
            <person name="Tsai S.M."/>
            <person name="White F.F."/>
            <person name="Setubal J.C."/>
            <person name="Kitajima J.P."/>
        </authorList>
    </citation>
    <scope>NUCLEOTIDE SEQUENCE [LARGE SCALE GENOMIC DNA]</scope>
    <source>
        <strain>306</strain>
    </source>
</reference>
<name>GLO2_XANAC</name>
<organism>
    <name type="scientific">Xanthomonas axonopodis pv. citri (strain 306)</name>
    <dbReference type="NCBI Taxonomy" id="190486"/>
    <lineage>
        <taxon>Bacteria</taxon>
        <taxon>Pseudomonadati</taxon>
        <taxon>Pseudomonadota</taxon>
        <taxon>Gammaproteobacteria</taxon>
        <taxon>Lysobacterales</taxon>
        <taxon>Lysobacteraceae</taxon>
        <taxon>Xanthomonas</taxon>
    </lineage>
</organism>